<protein>
    <recommendedName>
        <fullName evidence="1">Catalase-peroxidase 2</fullName>
        <shortName evidence="1">CP 2</shortName>
        <ecNumber evidence="1">1.11.1.21</ecNumber>
    </recommendedName>
    <alternativeName>
        <fullName evidence="1">Peroxidase/catalase 2</fullName>
    </alternativeName>
</protein>
<organism>
    <name type="scientific">Legionella pneumophila (strain Lens)</name>
    <dbReference type="NCBI Taxonomy" id="297245"/>
    <lineage>
        <taxon>Bacteria</taxon>
        <taxon>Pseudomonadati</taxon>
        <taxon>Pseudomonadota</taxon>
        <taxon>Gammaproteobacteria</taxon>
        <taxon>Legionellales</taxon>
        <taxon>Legionellaceae</taxon>
        <taxon>Legionella</taxon>
    </lineage>
</organism>
<keyword id="KW-0349">Heme</keyword>
<keyword id="KW-0376">Hydrogen peroxide</keyword>
<keyword id="KW-0408">Iron</keyword>
<keyword id="KW-0479">Metal-binding</keyword>
<keyword id="KW-0560">Oxidoreductase</keyword>
<keyword id="KW-0575">Peroxidase</keyword>
<keyword id="KW-0732">Signal</keyword>
<sequence length="749" mass="82899">MFKRTIPLFAAFTLAISPSIFPNYAHAQEDKPKTNQYWWPKMLDLSPLRQPNATSNPMGEKFNYAEEFNSLDLNAVIEDLKKLMTTSQDWWPADYGNYGPLFIRMSWHAAGTYRIYDGRGGANGGFQRFAPQNSWPDNANLDKARRLLWPIKQKYGRKISWADLLVLAGNVAMESMGFKTIGFAGGREDAWEAININWGTEGKWLESKRQDKVGKLEKPLAATVMGLIYVNPEGPNGVPDPLAAAEKIRETFGRMAMNDEETVALIAGGHAFGKTHGAASGKYLGPAPEAAGIEEQGFGWKNSYGSGKGKDTITSGLEGAWTVTPTHWSHNYLQNLFNFNWVKTKSPGGAIQWVPENSNASSMVPDAFDPSKRHAPVMLTTDLALKFDPVYSKIAKRFLDNPKEFDDAFARAWFKLIHRDMGPRSRYLGSLVPKEIMIWQDPVPPVDYKLVDANDIANLKGKILNSGLTTPELVKTAWASASTFRGTDMRGGANGARIRLAPQKDWPANDPQELAKVLKTLESIQNNFNNAQADGKKISLADLIVLGGNAAIEQAAKQAGYDIIVPFTPGRTDATQGMTDVKSFEVLEPKADGFRNYFDKSNNMSPPEMLVDKASLLKLSVPEMTVLVGGMRVLNANTGQNQYGVFTDKPGTLNNDFFINLLSMSTEWKKSSETEGIYEGYDRKTGKLKWKATSVDLIFGANSELRAVAEAYATDDAKDKFIQDFVNAWVKVMTADRFDIKAANANINS</sequence>
<feature type="signal peptide" evidence="1">
    <location>
        <begin position="1"/>
        <end position="27"/>
    </location>
</feature>
<feature type="chain" id="PRO_0000354819" description="Catalase-peroxidase 2">
    <location>
        <begin position="28"/>
        <end position="749"/>
    </location>
</feature>
<feature type="active site" description="Proton acceptor" evidence="1">
    <location>
        <position position="108"/>
    </location>
</feature>
<feature type="binding site" description="axial binding residue" evidence="1">
    <location>
        <position position="270"/>
    </location>
    <ligand>
        <name>heme b</name>
        <dbReference type="ChEBI" id="CHEBI:60344"/>
    </ligand>
    <ligandPart>
        <name>Fe</name>
        <dbReference type="ChEBI" id="CHEBI:18248"/>
    </ligandPart>
</feature>
<feature type="site" description="Transition state stabilizer" evidence="1">
    <location>
        <position position="104"/>
    </location>
</feature>
<feature type="cross-link" description="Tryptophyl-tyrosyl-methioninium (Trp-Tyr) (with M-255)" evidence="1">
    <location>
        <begin position="107"/>
        <end position="229"/>
    </location>
</feature>
<feature type="cross-link" description="Tryptophyl-tyrosyl-methioninium (Tyr-Met) (with W-107)" evidence="1">
    <location>
        <begin position="229"/>
        <end position="255"/>
    </location>
</feature>
<proteinExistence type="inferred from homology"/>
<gene>
    <name evidence="1" type="primary">katG2</name>
    <name type="ordered locus">lpl0250</name>
</gene>
<accession>Q5WZY1</accession>
<comment type="function">
    <text evidence="1">Bifunctional enzyme with both catalase and broad-spectrum peroxidase activity.</text>
</comment>
<comment type="catalytic activity">
    <reaction evidence="1">
        <text>H2O2 + AH2 = A + 2 H2O</text>
        <dbReference type="Rhea" id="RHEA:30275"/>
        <dbReference type="ChEBI" id="CHEBI:13193"/>
        <dbReference type="ChEBI" id="CHEBI:15377"/>
        <dbReference type="ChEBI" id="CHEBI:16240"/>
        <dbReference type="ChEBI" id="CHEBI:17499"/>
        <dbReference type="EC" id="1.11.1.21"/>
    </reaction>
</comment>
<comment type="catalytic activity">
    <reaction evidence="1">
        <text>2 H2O2 = O2 + 2 H2O</text>
        <dbReference type="Rhea" id="RHEA:20309"/>
        <dbReference type="ChEBI" id="CHEBI:15377"/>
        <dbReference type="ChEBI" id="CHEBI:15379"/>
        <dbReference type="ChEBI" id="CHEBI:16240"/>
        <dbReference type="EC" id="1.11.1.21"/>
    </reaction>
</comment>
<comment type="cofactor">
    <cofactor evidence="1">
        <name>heme b</name>
        <dbReference type="ChEBI" id="CHEBI:60344"/>
    </cofactor>
    <text evidence="1">Binds 1 heme b (iron(II)-protoporphyrin IX) group per dimer.</text>
</comment>
<comment type="subunit">
    <text evidence="1">Homodimer or homotetramer.</text>
</comment>
<comment type="PTM">
    <text evidence="1">Formation of the three residue Trp-Tyr-Met cross-link is important for the catalase, but not the peroxidase activity of the enzyme.</text>
</comment>
<comment type="similarity">
    <text evidence="1">Belongs to the peroxidase family. Peroxidase/catalase subfamily.</text>
</comment>
<name>KATG2_LEGPL</name>
<evidence type="ECO:0000255" key="1">
    <source>
        <dbReference type="HAMAP-Rule" id="MF_01961"/>
    </source>
</evidence>
<dbReference type="EC" id="1.11.1.21" evidence="1"/>
<dbReference type="EMBL" id="CR628337">
    <property type="protein sequence ID" value="CAH14481.1"/>
    <property type="molecule type" value="Genomic_DNA"/>
</dbReference>
<dbReference type="RefSeq" id="WP_011214515.1">
    <property type="nucleotide sequence ID" value="NC_006369.1"/>
</dbReference>
<dbReference type="SMR" id="Q5WZY1"/>
<dbReference type="PeroxiBase" id="2397">
    <property type="entry name" value="LpnCP01_Lens"/>
</dbReference>
<dbReference type="KEGG" id="lpf:lpl0250"/>
<dbReference type="LegioList" id="lpl0250"/>
<dbReference type="HOGENOM" id="CLU_025424_2_0_6"/>
<dbReference type="Proteomes" id="UP000002517">
    <property type="component" value="Chromosome"/>
</dbReference>
<dbReference type="GO" id="GO:0005829">
    <property type="term" value="C:cytosol"/>
    <property type="evidence" value="ECO:0007669"/>
    <property type="project" value="TreeGrafter"/>
</dbReference>
<dbReference type="GO" id="GO:0004096">
    <property type="term" value="F:catalase activity"/>
    <property type="evidence" value="ECO:0007669"/>
    <property type="project" value="UniProtKB-UniRule"/>
</dbReference>
<dbReference type="GO" id="GO:0020037">
    <property type="term" value="F:heme binding"/>
    <property type="evidence" value="ECO:0007669"/>
    <property type="project" value="InterPro"/>
</dbReference>
<dbReference type="GO" id="GO:0046872">
    <property type="term" value="F:metal ion binding"/>
    <property type="evidence" value="ECO:0007669"/>
    <property type="project" value="UniProtKB-KW"/>
</dbReference>
<dbReference type="GO" id="GO:0070301">
    <property type="term" value="P:cellular response to hydrogen peroxide"/>
    <property type="evidence" value="ECO:0007669"/>
    <property type="project" value="TreeGrafter"/>
</dbReference>
<dbReference type="GO" id="GO:0042744">
    <property type="term" value="P:hydrogen peroxide catabolic process"/>
    <property type="evidence" value="ECO:0007669"/>
    <property type="project" value="UniProtKB-KW"/>
</dbReference>
<dbReference type="CDD" id="cd00649">
    <property type="entry name" value="catalase_peroxidase_1"/>
    <property type="match status" value="1"/>
</dbReference>
<dbReference type="CDD" id="cd08200">
    <property type="entry name" value="catalase_peroxidase_2"/>
    <property type="match status" value="1"/>
</dbReference>
<dbReference type="FunFam" id="1.10.420.10:FF:000002">
    <property type="entry name" value="Catalase-peroxidase"/>
    <property type="match status" value="1"/>
</dbReference>
<dbReference type="FunFam" id="1.10.420.10:FF:000004">
    <property type="entry name" value="Catalase-peroxidase"/>
    <property type="match status" value="1"/>
</dbReference>
<dbReference type="FunFam" id="1.10.520.10:FF:000002">
    <property type="entry name" value="Catalase-peroxidase"/>
    <property type="match status" value="1"/>
</dbReference>
<dbReference type="Gene3D" id="1.10.520.10">
    <property type="match status" value="2"/>
</dbReference>
<dbReference type="Gene3D" id="1.10.420.10">
    <property type="entry name" value="Peroxidase, domain 2"/>
    <property type="match status" value="2"/>
</dbReference>
<dbReference type="HAMAP" id="MF_01961">
    <property type="entry name" value="Catal_peroxid"/>
    <property type="match status" value="1"/>
</dbReference>
<dbReference type="InterPro" id="IPR000763">
    <property type="entry name" value="Catalase_peroxidase"/>
</dbReference>
<dbReference type="InterPro" id="IPR002016">
    <property type="entry name" value="Haem_peroxidase"/>
</dbReference>
<dbReference type="InterPro" id="IPR010255">
    <property type="entry name" value="Haem_peroxidase_sf"/>
</dbReference>
<dbReference type="InterPro" id="IPR019794">
    <property type="entry name" value="Peroxidases_AS"/>
</dbReference>
<dbReference type="InterPro" id="IPR019793">
    <property type="entry name" value="Peroxidases_heam-ligand_BS"/>
</dbReference>
<dbReference type="NCBIfam" id="TIGR00198">
    <property type="entry name" value="cat_per_HPI"/>
    <property type="match status" value="1"/>
</dbReference>
<dbReference type="NCBIfam" id="NF011635">
    <property type="entry name" value="PRK15061.1"/>
    <property type="match status" value="1"/>
</dbReference>
<dbReference type="PANTHER" id="PTHR30555:SF0">
    <property type="entry name" value="CATALASE-PEROXIDASE"/>
    <property type="match status" value="1"/>
</dbReference>
<dbReference type="PANTHER" id="PTHR30555">
    <property type="entry name" value="HYDROPEROXIDASE I, BIFUNCTIONAL CATALASE-PEROXIDASE"/>
    <property type="match status" value="1"/>
</dbReference>
<dbReference type="Pfam" id="PF00141">
    <property type="entry name" value="peroxidase"/>
    <property type="match status" value="2"/>
</dbReference>
<dbReference type="PRINTS" id="PR00460">
    <property type="entry name" value="BPEROXIDASE"/>
</dbReference>
<dbReference type="PRINTS" id="PR00458">
    <property type="entry name" value="PEROXIDASE"/>
</dbReference>
<dbReference type="SUPFAM" id="SSF48113">
    <property type="entry name" value="Heme-dependent peroxidases"/>
    <property type="match status" value="2"/>
</dbReference>
<dbReference type="PROSITE" id="PS00435">
    <property type="entry name" value="PEROXIDASE_1"/>
    <property type="match status" value="1"/>
</dbReference>
<dbReference type="PROSITE" id="PS00436">
    <property type="entry name" value="PEROXIDASE_2"/>
    <property type="match status" value="1"/>
</dbReference>
<dbReference type="PROSITE" id="PS50873">
    <property type="entry name" value="PEROXIDASE_4"/>
    <property type="match status" value="1"/>
</dbReference>
<reference key="1">
    <citation type="journal article" date="2004" name="Nat. Genet.">
        <title>Evidence in the Legionella pneumophila genome for exploitation of host cell functions and high genome plasticity.</title>
        <authorList>
            <person name="Cazalet C."/>
            <person name="Rusniok C."/>
            <person name="Brueggemann H."/>
            <person name="Zidane N."/>
            <person name="Magnier A."/>
            <person name="Ma L."/>
            <person name="Tichit M."/>
            <person name="Jarraud S."/>
            <person name="Bouchier C."/>
            <person name="Vandenesch F."/>
            <person name="Kunst F."/>
            <person name="Etienne J."/>
            <person name="Glaser P."/>
            <person name="Buchrieser C."/>
        </authorList>
    </citation>
    <scope>NUCLEOTIDE SEQUENCE [LARGE SCALE GENOMIC DNA]</scope>
    <source>
        <strain>Lens</strain>
    </source>
</reference>